<name>LEXA_ECO27</name>
<keyword id="KW-0068">Autocatalytic cleavage</keyword>
<keyword id="KW-0227">DNA damage</keyword>
<keyword id="KW-0234">DNA repair</keyword>
<keyword id="KW-0235">DNA replication</keyword>
<keyword id="KW-0238">DNA-binding</keyword>
<keyword id="KW-0378">Hydrolase</keyword>
<keyword id="KW-1185">Reference proteome</keyword>
<keyword id="KW-0678">Repressor</keyword>
<keyword id="KW-0742">SOS response</keyword>
<keyword id="KW-0804">Transcription</keyword>
<keyword id="KW-0805">Transcription regulation</keyword>
<gene>
    <name evidence="1" type="primary">lexA</name>
    <name type="ordered locus">E2348C_4358</name>
</gene>
<comment type="function">
    <text evidence="1">Represses a number of genes involved in the response to DNA damage (SOS response), including recA and lexA. Binds to the 16 bp palindromic sequence 5'-CTGTATATATATACAG-3'. In the presence of single-stranded DNA, RecA interacts with LexA causing an autocatalytic cleavage which disrupts the DNA-binding part of LexA, leading to derepression of the SOS regulon and eventually DNA repair.</text>
</comment>
<comment type="catalytic activity">
    <reaction evidence="1">
        <text>Hydrolysis of Ala-|-Gly bond in repressor LexA.</text>
        <dbReference type="EC" id="3.4.21.88"/>
    </reaction>
</comment>
<comment type="subunit">
    <text evidence="1">Homodimer.</text>
</comment>
<comment type="similarity">
    <text evidence="1">Belongs to the peptidase S24 family.</text>
</comment>
<proteinExistence type="inferred from homology"/>
<sequence>MKALTARQQEVFDLIRDHISQTGMPPTRAEIAQRLGFRSPNAAEEHLKALARKGVIEIVSGASRGIRLLQEEEEGLPLVGRVAAGEPLLAQQHIEGHYQVDPSLFKPNADFLLRVSGMSMKDIGIMDGDLLAVHKTQDVRNGQVVVARIDDEVTVKRLKKQGNKVELLPENSEFKPIVVDLRQQSFTIEGLAVGVIRNGDWL</sequence>
<dbReference type="EC" id="3.4.21.88" evidence="1"/>
<dbReference type="EMBL" id="FM180568">
    <property type="protein sequence ID" value="CAS11906.1"/>
    <property type="molecule type" value="Genomic_DNA"/>
</dbReference>
<dbReference type="RefSeq" id="WP_000646078.1">
    <property type="nucleotide sequence ID" value="NC_011601.1"/>
</dbReference>
<dbReference type="SMR" id="B7UPK4"/>
<dbReference type="MEROPS" id="S24.001"/>
<dbReference type="GeneID" id="93777788"/>
<dbReference type="KEGG" id="ecg:E2348C_4358"/>
<dbReference type="HOGENOM" id="CLU_066192_45_3_6"/>
<dbReference type="Proteomes" id="UP000008205">
    <property type="component" value="Chromosome"/>
</dbReference>
<dbReference type="GO" id="GO:0003677">
    <property type="term" value="F:DNA binding"/>
    <property type="evidence" value="ECO:0007669"/>
    <property type="project" value="UniProtKB-UniRule"/>
</dbReference>
<dbReference type="GO" id="GO:0004252">
    <property type="term" value="F:serine-type endopeptidase activity"/>
    <property type="evidence" value="ECO:0007669"/>
    <property type="project" value="UniProtKB-UniRule"/>
</dbReference>
<dbReference type="GO" id="GO:0006281">
    <property type="term" value="P:DNA repair"/>
    <property type="evidence" value="ECO:0007669"/>
    <property type="project" value="UniProtKB-UniRule"/>
</dbReference>
<dbReference type="GO" id="GO:0006260">
    <property type="term" value="P:DNA replication"/>
    <property type="evidence" value="ECO:0007669"/>
    <property type="project" value="UniProtKB-UniRule"/>
</dbReference>
<dbReference type="GO" id="GO:0045892">
    <property type="term" value="P:negative regulation of DNA-templated transcription"/>
    <property type="evidence" value="ECO:0007669"/>
    <property type="project" value="UniProtKB-UniRule"/>
</dbReference>
<dbReference type="GO" id="GO:0006508">
    <property type="term" value="P:proteolysis"/>
    <property type="evidence" value="ECO:0007669"/>
    <property type="project" value="InterPro"/>
</dbReference>
<dbReference type="GO" id="GO:0009432">
    <property type="term" value="P:SOS response"/>
    <property type="evidence" value="ECO:0007669"/>
    <property type="project" value="UniProtKB-UniRule"/>
</dbReference>
<dbReference type="CDD" id="cd06529">
    <property type="entry name" value="S24_LexA-like"/>
    <property type="match status" value="1"/>
</dbReference>
<dbReference type="FunFam" id="1.10.10.10:FF:000009">
    <property type="entry name" value="LexA repressor"/>
    <property type="match status" value="1"/>
</dbReference>
<dbReference type="FunFam" id="2.10.109.10:FF:000001">
    <property type="entry name" value="LexA repressor"/>
    <property type="match status" value="1"/>
</dbReference>
<dbReference type="Gene3D" id="2.10.109.10">
    <property type="entry name" value="Umud Fragment, subunit A"/>
    <property type="match status" value="1"/>
</dbReference>
<dbReference type="Gene3D" id="1.10.10.10">
    <property type="entry name" value="Winged helix-like DNA-binding domain superfamily/Winged helix DNA-binding domain"/>
    <property type="match status" value="1"/>
</dbReference>
<dbReference type="HAMAP" id="MF_00015">
    <property type="entry name" value="LexA"/>
    <property type="match status" value="1"/>
</dbReference>
<dbReference type="InterPro" id="IPR006200">
    <property type="entry name" value="LexA"/>
</dbReference>
<dbReference type="InterPro" id="IPR039418">
    <property type="entry name" value="LexA-like"/>
</dbReference>
<dbReference type="InterPro" id="IPR036286">
    <property type="entry name" value="LexA/Signal_pep-like_sf"/>
</dbReference>
<dbReference type="InterPro" id="IPR006199">
    <property type="entry name" value="LexA_DNA-bd_dom"/>
</dbReference>
<dbReference type="InterPro" id="IPR050077">
    <property type="entry name" value="LexA_repressor"/>
</dbReference>
<dbReference type="InterPro" id="IPR006197">
    <property type="entry name" value="Peptidase_S24_LexA"/>
</dbReference>
<dbReference type="InterPro" id="IPR015927">
    <property type="entry name" value="Peptidase_S24_S26A/B/C"/>
</dbReference>
<dbReference type="InterPro" id="IPR036388">
    <property type="entry name" value="WH-like_DNA-bd_sf"/>
</dbReference>
<dbReference type="InterPro" id="IPR036390">
    <property type="entry name" value="WH_DNA-bd_sf"/>
</dbReference>
<dbReference type="NCBIfam" id="TIGR00498">
    <property type="entry name" value="lexA"/>
    <property type="match status" value="1"/>
</dbReference>
<dbReference type="PANTHER" id="PTHR33516">
    <property type="entry name" value="LEXA REPRESSOR"/>
    <property type="match status" value="1"/>
</dbReference>
<dbReference type="PANTHER" id="PTHR33516:SF2">
    <property type="entry name" value="LEXA REPRESSOR-RELATED"/>
    <property type="match status" value="1"/>
</dbReference>
<dbReference type="Pfam" id="PF01726">
    <property type="entry name" value="LexA_DNA_bind"/>
    <property type="match status" value="1"/>
</dbReference>
<dbReference type="Pfam" id="PF00717">
    <property type="entry name" value="Peptidase_S24"/>
    <property type="match status" value="1"/>
</dbReference>
<dbReference type="PRINTS" id="PR00726">
    <property type="entry name" value="LEXASERPTASE"/>
</dbReference>
<dbReference type="SUPFAM" id="SSF51306">
    <property type="entry name" value="LexA/Signal peptidase"/>
    <property type="match status" value="1"/>
</dbReference>
<dbReference type="SUPFAM" id="SSF46785">
    <property type="entry name" value="Winged helix' DNA-binding domain"/>
    <property type="match status" value="1"/>
</dbReference>
<evidence type="ECO:0000255" key="1">
    <source>
        <dbReference type="HAMAP-Rule" id="MF_00015"/>
    </source>
</evidence>
<protein>
    <recommendedName>
        <fullName evidence="1">LexA repressor</fullName>
        <ecNumber evidence="1">3.4.21.88</ecNumber>
    </recommendedName>
</protein>
<organism>
    <name type="scientific">Escherichia coli O127:H6 (strain E2348/69 / EPEC)</name>
    <dbReference type="NCBI Taxonomy" id="574521"/>
    <lineage>
        <taxon>Bacteria</taxon>
        <taxon>Pseudomonadati</taxon>
        <taxon>Pseudomonadota</taxon>
        <taxon>Gammaproteobacteria</taxon>
        <taxon>Enterobacterales</taxon>
        <taxon>Enterobacteriaceae</taxon>
        <taxon>Escherichia</taxon>
    </lineage>
</organism>
<reference key="1">
    <citation type="journal article" date="2009" name="J. Bacteriol.">
        <title>Complete genome sequence and comparative genome analysis of enteropathogenic Escherichia coli O127:H6 strain E2348/69.</title>
        <authorList>
            <person name="Iguchi A."/>
            <person name="Thomson N.R."/>
            <person name="Ogura Y."/>
            <person name="Saunders D."/>
            <person name="Ooka T."/>
            <person name="Henderson I.R."/>
            <person name="Harris D."/>
            <person name="Asadulghani M."/>
            <person name="Kurokawa K."/>
            <person name="Dean P."/>
            <person name="Kenny B."/>
            <person name="Quail M.A."/>
            <person name="Thurston S."/>
            <person name="Dougan G."/>
            <person name="Hayashi T."/>
            <person name="Parkhill J."/>
            <person name="Frankel G."/>
        </authorList>
    </citation>
    <scope>NUCLEOTIDE SEQUENCE [LARGE SCALE GENOMIC DNA]</scope>
    <source>
        <strain>E2348/69 / EPEC</strain>
    </source>
</reference>
<feature type="chain" id="PRO_1000116604" description="LexA repressor">
    <location>
        <begin position="1"/>
        <end position="202"/>
    </location>
</feature>
<feature type="DNA-binding region" description="H-T-H motif" evidence="1">
    <location>
        <begin position="28"/>
        <end position="48"/>
    </location>
</feature>
<feature type="active site" description="For autocatalytic cleavage activity" evidence="1">
    <location>
        <position position="119"/>
    </location>
</feature>
<feature type="active site" description="For autocatalytic cleavage activity" evidence="1">
    <location>
        <position position="156"/>
    </location>
</feature>
<feature type="site" description="Cleavage; by autolysis" evidence="1">
    <location>
        <begin position="84"/>
        <end position="85"/>
    </location>
</feature>
<accession>B7UPK4</accession>